<gene>
    <name type="primary">CYB5R4</name>
</gene>
<reference key="1">
    <citation type="submission" date="2005-11" db="EMBL/GenBank/DDBJ databases">
        <authorList>
            <consortium name="NIH - Mammalian Gene Collection (MGC) project"/>
        </authorList>
    </citation>
    <scope>NUCLEOTIDE SEQUENCE [LARGE SCALE MRNA]</scope>
    <source>
        <strain>Crossbred X Angus</strain>
        <tissue>Liver</tissue>
    </source>
</reference>
<proteinExistence type="evidence at transcript level"/>
<organism>
    <name type="scientific">Bos taurus</name>
    <name type="common">Bovine</name>
    <dbReference type="NCBI Taxonomy" id="9913"/>
    <lineage>
        <taxon>Eukaryota</taxon>
        <taxon>Metazoa</taxon>
        <taxon>Chordata</taxon>
        <taxon>Craniata</taxon>
        <taxon>Vertebrata</taxon>
        <taxon>Euteleostomi</taxon>
        <taxon>Mammalia</taxon>
        <taxon>Eutheria</taxon>
        <taxon>Laurasiatheria</taxon>
        <taxon>Artiodactyla</taxon>
        <taxon>Ruminantia</taxon>
        <taxon>Pecora</taxon>
        <taxon>Bovidae</taxon>
        <taxon>Bovinae</taxon>
        <taxon>Bos</taxon>
    </lineage>
</organism>
<feature type="chain" id="PRO_0000287555" description="Cytochrome b5 reductase 4">
    <location>
        <begin position="1"/>
        <end position="520"/>
    </location>
</feature>
<feature type="domain" description="Cytochrome b5 heme-binding" evidence="3">
    <location>
        <begin position="54"/>
        <end position="130"/>
    </location>
</feature>
<feature type="domain" description="CS" evidence="4">
    <location>
        <begin position="164"/>
        <end position="255"/>
    </location>
</feature>
<feature type="domain" description="FAD-binding FR-type" evidence="5">
    <location>
        <begin position="272"/>
        <end position="384"/>
    </location>
</feature>
<feature type="region of interest" description="Disordered" evidence="6">
    <location>
        <begin position="1"/>
        <end position="27"/>
    </location>
</feature>
<feature type="compositionally biased region" description="Low complexity" evidence="6">
    <location>
        <begin position="1"/>
        <end position="16"/>
    </location>
</feature>
<feature type="binding site" description="axial binding residue" evidence="3">
    <location>
        <position position="89"/>
    </location>
    <ligand>
        <name>heme</name>
        <dbReference type="ChEBI" id="CHEBI:30413"/>
    </ligand>
    <ligandPart>
        <name>Fe</name>
        <dbReference type="ChEBI" id="CHEBI:18248"/>
    </ligandPart>
</feature>
<feature type="binding site" description="axial binding residue" evidence="3">
    <location>
        <position position="112"/>
    </location>
    <ligand>
        <name>heme</name>
        <dbReference type="ChEBI" id="CHEBI:30413"/>
    </ligand>
    <ligandPart>
        <name>Fe</name>
        <dbReference type="ChEBI" id="CHEBI:18248"/>
    </ligandPart>
</feature>
<feature type="binding site" evidence="1">
    <location>
        <begin position="364"/>
        <end position="379"/>
    </location>
    <ligand>
        <name>FAD</name>
        <dbReference type="ChEBI" id="CHEBI:57692"/>
    </ligand>
</feature>
<feature type="binding site" evidence="1">
    <location>
        <begin position="391"/>
        <end position="423"/>
    </location>
    <ligand>
        <name>FAD</name>
        <dbReference type="ChEBI" id="CHEBI:57692"/>
    </ligand>
</feature>
<feature type="modified residue" description="N-acetylmethionine" evidence="2">
    <location>
        <position position="1"/>
    </location>
</feature>
<comment type="function">
    <text evidence="1">NADH-cytochrome b5 reductase involved in endoplasmic reticulum stress response pathway. Plays a critical role in protecting pancreatic beta-cells against oxidant stress, possibly by protecting the cell from excess buildup of reactive oxygen species (ROS) (By similarity).</text>
</comment>
<comment type="catalytic activity">
    <reaction>
        <text>2 Fe(III)-[cytochrome b5] + NADH = 2 Fe(II)-[cytochrome b5] + NAD(+) + H(+)</text>
        <dbReference type="Rhea" id="RHEA:46680"/>
        <dbReference type="Rhea" id="RHEA-COMP:10438"/>
        <dbReference type="Rhea" id="RHEA-COMP:10439"/>
        <dbReference type="ChEBI" id="CHEBI:15378"/>
        <dbReference type="ChEBI" id="CHEBI:29033"/>
        <dbReference type="ChEBI" id="CHEBI:29034"/>
        <dbReference type="ChEBI" id="CHEBI:57540"/>
        <dbReference type="ChEBI" id="CHEBI:57945"/>
        <dbReference type="EC" id="1.6.2.2"/>
    </reaction>
</comment>
<comment type="cofactor">
    <cofactor evidence="1">
        <name>FAD</name>
        <dbReference type="ChEBI" id="CHEBI:57692"/>
    </cofactor>
</comment>
<comment type="subcellular location">
    <subcellularLocation>
        <location>Endoplasmic reticulum</location>
    </subcellularLocation>
    <text evidence="1">Soluble protein.</text>
</comment>
<comment type="similarity">
    <text evidence="7">Belongs to the flavoprotein pyridine nucleotide cytochrome reductase family.</text>
</comment>
<accession>Q32LH7</accession>
<protein>
    <recommendedName>
        <fullName>Cytochrome b5 reductase 4</fullName>
        <ecNumber>1.6.2.2</ecNumber>
    </recommendedName>
    <alternativeName>
        <fullName>Flavohemoprotein b5/b5R</fullName>
        <shortName>b5+b5R</shortName>
    </alternativeName>
    <alternativeName>
        <fullName>cb5/cb5R</fullName>
    </alternativeName>
</protein>
<dbReference type="EC" id="1.6.2.2"/>
<dbReference type="EMBL" id="BC109569">
    <property type="protein sequence ID" value="AAI09570.1"/>
    <property type="molecule type" value="mRNA"/>
</dbReference>
<dbReference type="RefSeq" id="NP_001033248.1">
    <property type="nucleotide sequence ID" value="NM_001038159.1"/>
</dbReference>
<dbReference type="SMR" id="Q32LH7"/>
<dbReference type="FunCoup" id="Q32LH7">
    <property type="interactions" value="2812"/>
</dbReference>
<dbReference type="STRING" id="9913.ENSBTAP00000067057"/>
<dbReference type="PaxDb" id="9913-ENSBTAP00000051953"/>
<dbReference type="Ensembl" id="ENSBTAT00000084559.2">
    <property type="protein sequence ID" value="ENSBTAP00000067057.1"/>
    <property type="gene ID" value="ENSBTAG00000013591.7"/>
</dbReference>
<dbReference type="GeneID" id="533608"/>
<dbReference type="KEGG" id="bta:533608"/>
<dbReference type="CTD" id="51167"/>
<dbReference type="VEuPathDB" id="HostDB:ENSBTAG00000013591"/>
<dbReference type="VGNC" id="VGNC:50264">
    <property type="gene designation" value="CYB5R4"/>
</dbReference>
<dbReference type="eggNOG" id="KOG0534">
    <property type="taxonomic scope" value="Eukaryota"/>
</dbReference>
<dbReference type="eggNOG" id="KOG0536">
    <property type="taxonomic scope" value="Eukaryota"/>
</dbReference>
<dbReference type="GeneTree" id="ENSGT00940000155536"/>
<dbReference type="InParanoid" id="Q32LH7"/>
<dbReference type="OMA" id="ERFSCTN"/>
<dbReference type="OrthoDB" id="432299at2759"/>
<dbReference type="Reactome" id="R-BTA-1237044">
    <property type="pathway name" value="Erythrocytes take up carbon dioxide and release oxygen"/>
</dbReference>
<dbReference type="Proteomes" id="UP000009136">
    <property type="component" value="Chromosome 9"/>
</dbReference>
<dbReference type="Bgee" id="ENSBTAG00000013591">
    <property type="expression patterns" value="Expressed in oocyte and 106 other cell types or tissues"/>
</dbReference>
<dbReference type="GO" id="GO:0005737">
    <property type="term" value="C:cytoplasm"/>
    <property type="evidence" value="ECO:0000318"/>
    <property type="project" value="GO_Central"/>
</dbReference>
<dbReference type="GO" id="GO:0005783">
    <property type="term" value="C:endoplasmic reticulum"/>
    <property type="evidence" value="ECO:0000318"/>
    <property type="project" value="GO_Central"/>
</dbReference>
<dbReference type="GO" id="GO:0048471">
    <property type="term" value="C:perinuclear region of cytoplasm"/>
    <property type="evidence" value="ECO:0007669"/>
    <property type="project" value="Ensembl"/>
</dbReference>
<dbReference type="GO" id="GO:0004128">
    <property type="term" value="F:cytochrome-b5 reductase activity, acting on NAD(P)H"/>
    <property type="evidence" value="ECO:0000318"/>
    <property type="project" value="GO_Central"/>
</dbReference>
<dbReference type="GO" id="GO:0020037">
    <property type="term" value="F:heme binding"/>
    <property type="evidence" value="ECO:0000318"/>
    <property type="project" value="GO_Central"/>
</dbReference>
<dbReference type="GO" id="GO:0046872">
    <property type="term" value="F:metal ion binding"/>
    <property type="evidence" value="ECO:0007669"/>
    <property type="project" value="UniProtKB-KW"/>
</dbReference>
<dbReference type="GO" id="GO:0016174">
    <property type="term" value="F:NAD(P)H oxidase H2O2-forming activity"/>
    <property type="evidence" value="ECO:0007669"/>
    <property type="project" value="Ensembl"/>
</dbReference>
<dbReference type="GO" id="GO:0048468">
    <property type="term" value="P:cell development"/>
    <property type="evidence" value="ECO:0007669"/>
    <property type="project" value="Ensembl"/>
</dbReference>
<dbReference type="GO" id="GO:0042593">
    <property type="term" value="P:glucose homeostasis"/>
    <property type="evidence" value="ECO:0007669"/>
    <property type="project" value="Ensembl"/>
</dbReference>
<dbReference type="GO" id="GO:0030073">
    <property type="term" value="P:insulin secretion"/>
    <property type="evidence" value="ECO:0007669"/>
    <property type="project" value="Ensembl"/>
</dbReference>
<dbReference type="GO" id="GO:0046677">
    <property type="term" value="P:response to antibiotic"/>
    <property type="evidence" value="ECO:0007669"/>
    <property type="project" value="Ensembl"/>
</dbReference>
<dbReference type="GO" id="GO:0006801">
    <property type="term" value="P:superoxide metabolic process"/>
    <property type="evidence" value="ECO:0000318"/>
    <property type="project" value="GO_Central"/>
</dbReference>
<dbReference type="CDD" id="cd06183">
    <property type="entry name" value="cyt_b5_reduct_like"/>
    <property type="match status" value="1"/>
</dbReference>
<dbReference type="CDD" id="cd06490">
    <property type="entry name" value="p23_NCB5OR"/>
    <property type="match status" value="1"/>
</dbReference>
<dbReference type="FunFam" id="2.40.30.10:FF:000063">
    <property type="entry name" value="Cytochrome b5 reductase 4"/>
    <property type="match status" value="1"/>
</dbReference>
<dbReference type="FunFam" id="3.10.120.10:FF:000001">
    <property type="entry name" value="Cytochrome b5 reductase 4"/>
    <property type="match status" value="1"/>
</dbReference>
<dbReference type="FunFam" id="3.40.50.80:FF:000021">
    <property type="entry name" value="Cytochrome b5 reductase 4"/>
    <property type="match status" value="1"/>
</dbReference>
<dbReference type="FunFam" id="2.60.40.790:FF:000019">
    <property type="entry name" value="cytochrome b5 reductase 4 isoform X1"/>
    <property type="match status" value="1"/>
</dbReference>
<dbReference type="Gene3D" id="2.60.40.790">
    <property type="match status" value="1"/>
</dbReference>
<dbReference type="Gene3D" id="3.10.120.10">
    <property type="entry name" value="Cytochrome b5-like heme/steroid binding domain"/>
    <property type="match status" value="1"/>
</dbReference>
<dbReference type="Gene3D" id="3.40.50.80">
    <property type="entry name" value="Nucleotide-binding domain of ferredoxin-NADP reductase (FNR) module"/>
    <property type="match status" value="1"/>
</dbReference>
<dbReference type="Gene3D" id="2.40.30.10">
    <property type="entry name" value="Translation factors"/>
    <property type="match status" value="1"/>
</dbReference>
<dbReference type="InterPro" id="IPR008333">
    <property type="entry name" value="Cbr1-like_FAD-bd_dom"/>
</dbReference>
<dbReference type="InterPro" id="IPR007052">
    <property type="entry name" value="CS_dom"/>
</dbReference>
<dbReference type="InterPro" id="IPR001199">
    <property type="entry name" value="Cyt_B5-like_heme/steroid-bd"/>
</dbReference>
<dbReference type="InterPro" id="IPR036400">
    <property type="entry name" value="Cyt_B5-like_heme/steroid_sf"/>
</dbReference>
<dbReference type="InterPro" id="IPR018506">
    <property type="entry name" value="Cyt_B5_heme-BS"/>
</dbReference>
<dbReference type="InterPro" id="IPR051872">
    <property type="entry name" value="Cytochrome_b5/Flavoprotein_Rdt"/>
</dbReference>
<dbReference type="InterPro" id="IPR017927">
    <property type="entry name" value="FAD-bd_FR_type"/>
</dbReference>
<dbReference type="InterPro" id="IPR039261">
    <property type="entry name" value="FNR_nucleotide-bd"/>
</dbReference>
<dbReference type="InterPro" id="IPR008978">
    <property type="entry name" value="HSP20-like_chaperone"/>
</dbReference>
<dbReference type="InterPro" id="IPR001433">
    <property type="entry name" value="OxRdtase_FAD/NAD-bd"/>
</dbReference>
<dbReference type="InterPro" id="IPR037908">
    <property type="entry name" value="p23_NCB5OR"/>
</dbReference>
<dbReference type="InterPro" id="IPR017938">
    <property type="entry name" value="Riboflavin_synthase-like_b-brl"/>
</dbReference>
<dbReference type="PANTHER" id="PTHR46237:SF1">
    <property type="entry name" value="CYTOCHROME B5 REDUCTASE 4"/>
    <property type="match status" value="1"/>
</dbReference>
<dbReference type="PANTHER" id="PTHR46237">
    <property type="entry name" value="CYTOCHROME B5 REDUCTASE 4 FAMILY MEMBER"/>
    <property type="match status" value="1"/>
</dbReference>
<dbReference type="Pfam" id="PF04969">
    <property type="entry name" value="CS"/>
    <property type="match status" value="1"/>
</dbReference>
<dbReference type="Pfam" id="PF00173">
    <property type="entry name" value="Cyt-b5"/>
    <property type="match status" value="1"/>
</dbReference>
<dbReference type="Pfam" id="PF00970">
    <property type="entry name" value="FAD_binding_6"/>
    <property type="match status" value="1"/>
</dbReference>
<dbReference type="Pfam" id="PF00175">
    <property type="entry name" value="NAD_binding_1"/>
    <property type="match status" value="1"/>
</dbReference>
<dbReference type="PRINTS" id="PR00406">
    <property type="entry name" value="CYTB5RDTASE"/>
</dbReference>
<dbReference type="PRINTS" id="PR00363">
    <property type="entry name" value="CYTOCHROMEB5"/>
</dbReference>
<dbReference type="SMART" id="SM01117">
    <property type="entry name" value="Cyt-b5"/>
    <property type="match status" value="1"/>
</dbReference>
<dbReference type="SUPFAM" id="SSF55856">
    <property type="entry name" value="Cytochrome b5-like heme/steroid binding domain"/>
    <property type="match status" value="1"/>
</dbReference>
<dbReference type="SUPFAM" id="SSF52343">
    <property type="entry name" value="Ferredoxin reductase-like, C-terminal NADP-linked domain"/>
    <property type="match status" value="1"/>
</dbReference>
<dbReference type="SUPFAM" id="SSF49764">
    <property type="entry name" value="HSP20-like chaperones"/>
    <property type="match status" value="1"/>
</dbReference>
<dbReference type="SUPFAM" id="SSF63380">
    <property type="entry name" value="Riboflavin synthase domain-like"/>
    <property type="match status" value="1"/>
</dbReference>
<dbReference type="PROSITE" id="PS51203">
    <property type="entry name" value="CS"/>
    <property type="match status" value="1"/>
</dbReference>
<dbReference type="PROSITE" id="PS00191">
    <property type="entry name" value="CYTOCHROME_B5_1"/>
    <property type="match status" value="1"/>
</dbReference>
<dbReference type="PROSITE" id="PS50255">
    <property type="entry name" value="CYTOCHROME_B5_2"/>
    <property type="match status" value="1"/>
</dbReference>
<dbReference type="PROSITE" id="PS51384">
    <property type="entry name" value="FAD_FR"/>
    <property type="match status" value="1"/>
</dbReference>
<keyword id="KW-0007">Acetylation</keyword>
<keyword id="KW-0256">Endoplasmic reticulum</keyword>
<keyword id="KW-0274">FAD</keyword>
<keyword id="KW-0285">Flavoprotein</keyword>
<keyword id="KW-0349">Heme</keyword>
<keyword id="KW-0408">Iron</keyword>
<keyword id="KW-0479">Metal-binding</keyword>
<keyword id="KW-0520">NAD</keyword>
<keyword id="KW-0560">Oxidoreductase</keyword>
<keyword id="KW-1185">Reference proteome</keyword>
<sequence>MLNVPSQSFPGPSSQQRVASGGRSKVPLKQGRSLMDWIRLTKSGKDLTGLKGRLIEVTEEELKKHNKKDDCWICIRGFVYNVSPYMEYHPGGEDELMRAAGSDGTDLFDQVHRWVNYESMLKECLVGRMAMKPALPKDYHEEKKVLNGMLPQSQVTDTLAKEGPSSPSYDWFQTDSLVTIVIYTKQKDINLDSVIVDHRDDSFRAETVIKDYSYLVHVALSHEIQEDFSVLVVENVGKIEIVLKKKENTSWKCLGHPQENHNSFIPKKDTGLFYRKCQLVSKEDVTHDTKLFCLMLPPSTHLEVPVGQHVYLRLPITGTEIVKPYTPVCDSLFSEFKEPVLPNNIYIYFLIKIYPAGFFTPELDQLQIGDYVSVSNPEGNFIISQLQELEDLFLLAAGTGFTPMVKVLNYALTNIPSLRKVKLMFFNKTEDDIIWRSQLEKLAFKDKRFEVEFVLSAPTSEWSGKQGYISPALLSEFLKRRSDTSKVLICLCGPTPFTEQGMKMLHDLNFSKDEIHSFTA</sequence>
<evidence type="ECO:0000250" key="1"/>
<evidence type="ECO:0000250" key="2">
    <source>
        <dbReference type="UniProtKB" id="Q7L1T6"/>
    </source>
</evidence>
<evidence type="ECO:0000255" key="3">
    <source>
        <dbReference type="PROSITE-ProRule" id="PRU00279"/>
    </source>
</evidence>
<evidence type="ECO:0000255" key="4">
    <source>
        <dbReference type="PROSITE-ProRule" id="PRU00547"/>
    </source>
</evidence>
<evidence type="ECO:0000255" key="5">
    <source>
        <dbReference type="PROSITE-ProRule" id="PRU00716"/>
    </source>
</evidence>
<evidence type="ECO:0000256" key="6">
    <source>
        <dbReference type="SAM" id="MobiDB-lite"/>
    </source>
</evidence>
<evidence type="ECO:0000305" key="7"/>
<name>NB5R4_BOVIN</name>